<feature type="chain" id="PRO_1000099550" description="UvrABC system protein B">
    <location>
        <begin position="1"/>
        <end position="673"/>
    </location>
</feature>
<feature type="domain" description="Helicase ATP-binding" evidence="1">
    <location>
        <begin position="26"/>
        <end position="183"/>
    </location>
</feature>
<feature type="domain" description="Helicase C-terminal" evidence="1">
    <location>
        <begin position="431"/>
        <end position="597"/>
    </location>
</feature>
<feature type="domain" description="UVR" evidence="1">
    <location>
        <begin position="633"/>
        <end position="668"/>
    </location>
</feature>
<feature type="region of interest" description="Disordered" evidence="2">
    <location>
        <begin position="608"/>
        <end position="627"/>
    </location>
</feature>
<feature type="short sequence motif" description="Beta-hairpin">
    <location>
        <begin position="92"/>
        <end position="115"/>
    </location>
</feature>
<feature type="binding site" evidence="1">
    <location>
        <begin position="39"/>
        <end position="46"/>
    </location>
    <ligand>
        <name>ATP</name>
        <dbReference type="ChEBI" id="CHEBI:30616"/>
    </ligand>
</feature>
<gene>
    <name evidence="1" type="primary">uvrB</name>
    <name type="ordered locus">ECSE_0833</name>
</gene>
<name>UVRB_ECOSE</name>
<comment type="function">
    <text evidence="1">The UvrABC repair system catalyzes the recognition and processing of DNA lesions. A damage recognition complex composed of 2 UvrA and 2 UvrB subunits scans DNA for abnormalities. Upon binding of the UvrA(2)B(2) complex to a putative damaged site, the DNA wraps around one UvrB monomer. DNA wrap is dependent on ATP binding by UvrB and probably causes local melting of the DNA helix, facilitating insertion of UvrB beta-hairpin between the DNA strands. Then UvrB probes one DNA strand for the presence of a lesion. If a lesion is found the UvrA subunits dissociate and the UvrB-DNA preincision complex is formed. This complex is subsequently bound by UvrC and the second UvrB is released. If no lesion is found, the DNA wraps around the other UvrB subunit that will check the other stand for damage.</text>
</comment>
<comment type="subunit">
    <text evidence="1">Forms a heterotetramer with UvrA during the search for lesions. Interacts with UvrC in an incision complex.</text>
</comment>
<comment type="subcellular location">
    <subcellularLocation>
        <location evidence="1">Cytoplasm</location>
    </subcellularLocation>
</comment>
<comment type="domain">
    <text evidence="1">The beta-hairpin motif is involved in DNA binding.</text>
</comment>
<comment type="similarity">
    <text evidence="1">Belongs to the UvrB family.</text>
</comment>
<protein>
    <recommendedName>
        <fullName evidence="1">UvrABC system protein B</fullName>
        <shortName evidence="1">Protein UvrB</shortName>
    </recommendedName>
    <alternativeName>
        <fullName evidence="1">Excinuclease ABC subunit B</fullName>
    </alternativeName>
</protein>
<evidence type="ECO:0000255" key="1">
    <source>
        <dbReference type="HAMAP-Rule" id="MF_00204"/>
    </source>
</evidence>
<evidence type="ECO:0000256" key="2">
    <source>
        <dbReference type="SAM" id="MobiDB-lite"/>
    </source>
</evidence>
<accession>B6I7T4</accession>
<proteinExistence type="inferred from homology"/>
<sequence length="673" mass="76226">MSKPFKLNSAFKPSGDQPEAIRRLEEGLEDGLAHQTLLGVTGSGKTFTIANVIADLQRPTMVLAPNKTLAAQLYGEMKEFFPENAVEYFVSYYDYYQPEAYVPSSDTFIEKDASVNEHIEQMRLSATKAMLERRDVVVVASVSAIYGLGDPDLYLKMMLHLTVGMIIDQRAILRRLAELQYARNDQAFQRGTFRVRGEVIDIFPAESDDIALRVELFDEEVERLSLFDPLTGQIVSTIPRFTIYPKTHYVTPRERIVQAMEEIKEELAARRKVLLENNKLLEEQRLTQRTQFDLEMMNELGYCSGIENYSRFLSGRGPGEPPPTLFDYLPADGLLVVDESHVTIPQIGGMYRGDRARKETLVEYGFRLPSALDNRPLKFEEFEALAPQTIYVSATPGNYELEKSGGDVVDQVVRPTGLLDPIIEVRPVATQVDDLLSEIRQRAAINERVLVTTLTKRMAEDLTEYLEEHGERVRYLHSDIDTVERMEIIRDLRLGEFDVLVGINLLREGLDMPEVSLVAILDADKEGFLRSERSLIQTIGRAARNVNGKAILYGDKITPSMAKAIGETERRREKQQKYNEEHGITPQGLNKKVVDILALGQNIAKTKAKGRGKSRPIVEPDNVPMDMSPKALQQKIHELEGLMMQHAQNLEFEEAAQIRDQLHQLRELFIAAS</sequence>
<keyword id="KW-0067">ATP-binding</keyword>
<keyword id="KW-0963">Cytoplasm</keyword>
<keyword id="KW-0227">DNA damage</keyword>
<keyword id="KW-0228">DNA excision</keyword>
<keyword id="KW-0234">DNA repair</keyword>
<keyword id="KW-0267">Excision nuclease</keyword>
<keyword id="KW-0347">Helicase</keyword>
<keyword id="KW-0378">Hydrolase</keyword>
<keyword id="KW-0547">Nucleotide-binding</keyword>
<keyword id="KW-0742">SOS response</keyword>
<organism>
    <name type="scientific">Escherichia coli (strain SE11)</name>
    <dbReference type="NCBI Taxonomy" id="409438"/>
    <lineage>
        <taxon>Bacteria</taxon>
        <taxon>Pseudomonadati</taxon>
        <taxon>Pseudomonadota</taxon>
        <taxon>Gammaproteobacteria</taxon>
        <taxon>Enterobacterales</taxon>
        <taxon>Enterobacteriaceae</taxon>
        <taxon>Escherichia</taxon>
    </lineage>
</organism>
<dbReference type="EMBL" id="AP009240">
    <property type="protein sequence ID" value="BAG76357.1"/>
    <property type="molecule type" value="Genomic_DNA"/>
</dbReference>
<dbReference type="RefSeq" id="WP_000042533.1">
    <property type="nucleotide sequence ID" value="NC_011415.1"/>
</dbReference>
<dbReference type="SMR" id="B6I7T4"/>
<dbReference type="GeneID" id="93776651"/>
<dbReference type="KEGG" id="ecy:ECSE_0833"/>
<dbReference type="HOGENOM" id="CLU_009621_2_1_6"/>
<dbReference type="Proteomes" id="UP000008199">
    <property type="component" value="Chromosome"/>
</dbReference>
<dbReference type="GO" id="GO:0005737">
    <property type="term" value="C:cytoplasm"/>
    <property type="evidence" value="ECO:0007669"/>
    <property type="project" value="UniProtKB-SubCell"/>
</dbReference>
<dbReference type="GO" id="GO:0009380">
    <property type="term" value="C:excinuclease repair complex"/>
    <property type="evidence" value="ECO:0007669"/>
    <property type="project" value="InterPro"/>
</dbReference>
<dbReference type="GO" id="GO:0005524">
    <property type="term" value="F:ATP binding"/>
    <property type="evidence" value="ECO:0007669"/>
    <property type="project" value="UniProtKB-UniRule"/>
</dbReference>
<dbReference type="GO" id="GO:0016887">
    <property type="term" value="F:ATP hydrolysis activity"/>
    <property type="evidence" value="ECO:0007669"/>
    <property type="project" value="InterPro"/>
</dbReference>
<dbReference type="GO" id="GO:0003677">
    <property type="term" value="F:DNA binding"/>
    <property type="evidence" value="ECO:0007669"/>
    <property type="project" value="UniProtKB-UniRule"/>
</dbReference>
<dbReference type="GO" id="GO:0009381">
    <property type="term" value="F:excinuclease ABC activity"/>
    <property type="evidence" value="ECO:0007669"/>
    <property type="project" value="UniProtKB-UniRule"/>
</dbReference>
<dbReference type="GO" id="GO:0004386">
    <property type="term" value="F:helicase activity"/>
    <property type="evidence" value="ECO:0007669"/>
    <property type="project" value="UniProtKB-KW"/>
</dbReference>
<dbReference type="GO" id="GO:0006289">
    <property type="term" value="P:nucleotide-excision repair"/>
    <property type="evidence" value="ECO:0007669"/>
    <property type="project" value="UniProtKB-UniRule"/>
</dbReference>
<dbReference type="GO" id="GO:0009432">
    <property type="term" value="P:SOS response"/>
    <property type="evidence" value="ECO:0007669"/>
    <property type="project" value="UniProtKB-UniRule"/>
</dbReference>
<dbReference type="CDD" id="cd17916">
    <property type="entry name" value="DEXHc_UvrB"/>
    <property type="match status" value="1"/>
</dbReference>
<dbReference type="CDD" id="cd18790">
    <property type="entry name" value="SF2_C_UvrB"/>
    <property type="match status" value="1"/>
</dbReference>
<dbReference type="FunFam" id="3.40.50.300:FF:000257">
    <property type="entry name" value="UvrABC system protein B"/>
    <property type="match status" value="1"/>
</dbReference>
<dbReference type="FunFam" id="3.40.50.300:FF:000401">
    <property type="entry name" value="UvrABC system protein B"/>
    <property type="match status" value="1"/>
</dbReference>
<dbReference type="FunFam" id="3.40.50.300:FF:000477">
    <property type="entry name" value="UvrABC system protein B"/>
    <property type="match status" value="1"/>
</dbReference>
<dbReference type="Gene3D" id="3.40.50.300">
    <property type="entry name" value="P-loop containing nucleotide triphosphate hydrolases"/>
    <property type="match status" value="3"/>
</dbReference>
<dbReference type="Gene3D" id="4.10.860.10">
    <property type="entry name" value="UVR domain"/>
    <property type="match status" value="1"/>
</dbReference>
<dbReference type="HAMAP" id="MF_00204">
    <property type="entry name" value="UvrB"/>
    <property type="match status" value="1"/>
</dbReference>
<dbReference type="InterPro" id="IPR006935">
    <property type="entry name" value="Helicase/UvrB_N"/>
</dbReference>
<dbReference type="InterPro" id="IPR014001">
    <property type="entry name" value="Helicase_ATP-bd"/>
</dbReference>
<dbReference type="InterPro" id="IPR001650">
    <property type="entry name" value="Helicase_C-like"/>
</dbReference>
<dbReference type="InterPro" id="IPR027417">
    <property type="entry name" value="P-loop_NTPase"/>
</dbReference>
<dbReference type="InterPro" id="IPR001943">
    <property type="entry name" value="UVR_dom"/>
</dbReference>
<dbReference type="InterPro" id="IPR036876">
    <property type="entry name" value="UVR_dom_sf"/>
</dbReference>
<dbReference type="InterPro" id="IPR004807">
    <property type="entry name" value="UvrB"/>
</dbReference>
<dbReference type="InterPro" id="IPR041471">
    <property type="entry name" value="UvrB_inter"/>
</dbReference>
<dbReference type="InterPro" id="IPR024759">
    <property type="entry name" value="UvrB_YAD/RRR_dom"/>
</dbReference>
<dbReference type="NCBIfam" id="NF003673">
    <property type="entry name" value="PRK05298.1"/>
    <property type="match status" value="1"/>
</dbReference>
<dbReference type="NCBIfam" id="TIGR00631">
    <property type="entry name" value="uvrb"/>
    <property type="match status" value="1"/>
</dbReference>
<dbReference type="PANTHER" id="PTHR24029">
    <property type="entry name" value="UVRABC SYSTEM PROTEIN B"/>
    <property type="match status" value="1"/>
</dbReference>
<dbReference type="PANTHER" id="PTHR24029:SF0">
    <property type="entry name" value="UVRABC SYSTEM PROTEIN B"/>
    <property type="match status" value="1"/>
</dbReference>
<dbReference type="Pfam" id="PF00271">
    <property type="entry name" value="Helicase_C"/>
    <property type="match status" value="1"/>
</dbReference>
<dbReference type="Pfam" id="PF04851">
    <property type="entry name" value="ResIII"/>
    <property type="match status" value="1"/>
</dbReference>
<dbReference type="Pfam" id="PF02151">
    <property type="entry name" value="UVR"/>
    <property type="match status" value="1"/>
</dbReference>
<dbReference type="Pfam" id="PF12344">
    <property type="entry name" value="UvrB"/>
    <property type="match status" value="1"/>
</dbReference>
<dbReference type="Pfam" id="PF17757">
    <property type="entry name" value="UvrB_inter"/>
    <property type="match status" value="1"/>
</dbReference>
<dbReference type="SMART" id="SM00487">
    <property type="entry name" value="DEXDc"/>
    <property type="match status" value="1"/>
</dbReference>
<dbReference type="SMART" id="SM00490">
    <property type="entry name" value="HELICc"/>
    <property type="match status" value="1"/>
</dbReference>
<dbReference type="SUPFAM" id="SSF46600">
    <property type="entry name" value="C-terminal UvrC-binding domain of UvrB"/>
    <property type="match status" value="1"/>
</dbReference>
<dbReference type="SUPFAM" id="SSF52540">
    <property type="entry name" value="P-loop containing nucleoside triphosphate hydrolases"/>
    <property type="match status" value="2"/>
</dbReference>
<dbReference type="PROSITE" id="PS51192">
    <property type="entry name" value="HELICASE_ATP_BIND_1"/>
    <property type="match status" value="1"/>
</dbReference>
<dbReference type="PROSITE" id="PS51194">
    <property type="entry name" value="HELICASE_CTER"/>
    <property type="match status" value="1"/>
</dbReference>
<dbReference type="PROSITE" id="PS50151">
    <property type="entry name" value="UVR"/>
    <property type="match status" value="1"/>
</dbReference>
<reference key="1">
    <citation type="journal article" date="2008" name="DNA Res.">
        <title>Complete genome sequence and comparative analysis of the wild-type commensal Escherichia coli strain SE11 isolated from a healthy adult.</title>
        <authorList>
            <person name="Oshima K."/>
            <person name="Toh H."/>
            <person name="Ogura Y."/>
            <person name="Sasamoto H."/>
            <person name="Morita H."/>
            <person name="Park S.-H."/>
            <person name="Ooka T."/>
            <person name="Iyoda S."/>
            <person name="Taylor T.D."/>
            <person name="Hayashi T."/>
            <person name="Itoh K."/>
            <person name="Hattori M."/>
        </authorList>
    </citation>
    <scope>NUCLEOTIDE SEQUENCE [LARGE SCALE GENOMIC DNA]</scope>
    <source>
        <strain>SE11</strain>
    </source>
</reference>